<geneLocation type="mitochondrion"/>
<protein>
    <recommendedName>
        <fullName>NADH-ubiquinone oxidoreductase chain 4L</fullName>
        <ecNumber>7.1.1.2</ecNumber>
    </recommendedName>
    <alternativeName>
        <fullName>NADH dehydrogenase subunit 4L</fullName>
    </alternativeName>
</protein>
<dbReference type="EC" id="7.1.1.2"/>
<dbReference type="EMBL" id="M10217">
    <property type="protein sequence ID" value="AAA66466.1"/>
    <property type="molecule type" value="Genomic_DNA"/>
</dbReference>
<dbReference type="PIR" id="A00431">
    <property type="entry name" value="QXXL4L"/>
</dbReference>
<dbReference type="RefSeq" id="NP_008142.1">
    <property type="nucleotide sequence ID" value="NC_001573.1"/>
</dbReference>
<dbReference type="SMR" id="P03904"/>
<dbReference type="GeneID" id="2642076"/>
<dbReference type="KEGG" id="xla:2642076"/>
<dbReference type="CTD" id="4539"/>
<dbReference type="OrthoDB" id="6146597at2759"/>
<dbReference type="Proteomes" id="UP000186698">
    <property type="component" value="Mitochondrion MT"/>
</dbReference>
<dbReference type="Bgee" id="2642076">
    <property type="expression patterns" value="Expressed in egg cell and 19 other cell types or tissues"/>
</dbReference>
<dbReference type="GO" id="GO:0005743">
    <property type="term" value="C:mitochondrial inner membrane"/>
    <property type="evidence" value="ECO:0000250"/>
    <property type="project" value="UniProtKB"/>
</dbReference>
<dbReference type="GO" id="GO:0045271">
    <property type="term" value="C:respiratory chain complex I"/>
    <property type="evidence" value="ECO:0000250"/>
    <property type="project" value="UniProtKB"/>
</dbReference>
<dbReference type="GO" id="GO:0008137">
    <property type="term" value="F:NADH dehydrogenase (ubiquinone) activity"/>
    <property type="evidence" value="ECO:0000250"/>
    <property type="project" value="UniProtKB"/>
</dbReference>
<dbReference type="Gene3D" id="1.10.287.3510">
    <property type="match status" value="1"/>
</dbReference>
<dbReference type="InterPro" id="IPR039428">
    <property type="entry name" value="NUOK/Mnh_C1-like"/>
</dbReference>
<dbReference type="Pfam" id="PF00420">
    <property type="entry name" value="Oxidored_q2"/>
    <property type="match status" value="1"/>
</dbReference>
<comment type="function">
    <text evidence="1">Core subunit of the mitochondrial membrane respiratory chain NADH dehydrogenase (Complex I) which catalyzes electron transfer from NADH through the respiratory chain, using ubiquinone as an electron acceptor. Part of the enzyme membrane arm which is embedded in the lipid bilayer and involved in proton translocation.</text>
</comment>
<comment type="catalytic activity">
    <reaction evidence="1">
        <text>a ubiquinone + NADH + 5 H(+)(in) = a ubiquinol + NAD(+) + 4 H(+)(out)</text>
        <dbReference type="Rhea" id="RHEA:29091"/>
        <dbReference type="Rhea" id="RHEA-COMP:9565"/>
        <dbReference type="Rhea" id="RHEA-COMP:9566"/>
        <dbReference type="ChEBI" id="CHEBI:15378"/>
        <dbReference type="ChEBI" id="CHEBI:16389"/>
        <dbReference type="ChEBI" id="CHEBI:17976"/>
        <dbReference type="ChEBI" id="CHEBI:57540"/>
        <dbReference type="ChEBI" id="CHEBI:57945"/>
        <dbReference type="EC" id="7.1.1.2"/>
    </reaction>
    <physiologicalReaction direction="left-to-right" evidence="1">
        <dbReference type="Rhea" id="RHEA:29092"/>
    </physiologicalReaction>
</comment>
<comment type="subunit">
    <text evidence="2">Core subunit of respiratory chain NADH dehydrogenase (Complex I) which is composed of 45 different subunits.</text>
</comment>
<comment type="subcellular location">
    <subcellularLocation>
        <location evidence="2">Mitochondrion inner membrane</location>
        <topology evidence="3">Multi-pass membrane protein</topology>
    </subcellularLocation>
</comment>
<comment type="similarity">
    <text evidence="4">Belongs to the complex I subunit 4L family.</text>
</comment>
<reference key="1">
    <citation type="journal article" date="1985" name="J. Biol. Chem.">
        <title>The complete nucleotide sequence of the Xenopus laevis mitochondrial genome.</title>
        <authorList>
            <person name="Roe B.A."/>
            <person name="Ma D.-P."/>
            <person name="Wilson R.K."/>
            <person name="Wong J.F.-H."/>
        </authorList>
    </citation>
    <scope>NUCLEOTIDE SEQUENCE [GENOMIC DNA]</scope>
</reference>
<keyword id="KW-0249">Electron transport</keyword>
<keyword id="KW-0472">Membrane</keyword>
<keyword id="KW-0496">Mitochondrion</keyword>
<keyword id="KW-0999">Mitochondrion inner membrane</keyword>
<keyword id="KW-0520">NAD</keyword>
<keyword id="KW-1185">Reference proteome</keyword>
<keyword id="KW-0679">Respiratory chain</keyword>
<keyword id="KW-1278">Translocase</keyword>
<keyword id="KW-0812">Transmembrane</keyword>
<keyword id="KW-1133">Transmembrane helix</keyword>
<keyword id="KW-0813">Transport</keyword>
<keyword id="KW-0830">Ubiquinone</keyword>
<feature type="chain" id="PRO_0000118500" description="NADH-ubiquinone oxidoreductase chain 4L">
    <location>
        <begin position="1"/>
        <end position="98"/>
    </location>
</feature>
<feature type="transmembrane region" description="Helical" evidence="3">
    <location>
        <begin position="1"/>
        <end position="21"/>
    </location>
</feature>
<feature type="transmembrane region" description="Helical" evidence="3">
    <location>
        <begin position="48"/>
        <end position="68"/>
    </location>
</feature>
<accession>P03904</accession>
<proteinExistence type="inferred from homology"/>
<gene>
    <name type="primary">mt-nd4l</name>
    <name type="synonym">mtnd4l</name>
    <name type="synonym">nadh4l</name>
    <name type="synonym">nd4l</name>
</gene>
<name>NU4LM_XENLA</name>
<evidence type="ECO:0000250" key="1">
    <source>
        <dbReference type="UniProtKB" id="P03901"/>
    </source>
</evidence>
<evidence type="ECO:0000250" key="2">
    <source>
        <dbReference type="UniProtKB" id="P03902"/>
    </source>
</evidence>
<evidence type="ECO:0000255" key="3"/>
<evidence type="ECO:0000305" key="4"/>
<sequence length="98" mass="10710">MTLIHFSFCSAFILGLTGLALNRSPILSILLCLEGMLLMSMDGIVLTPLHLTIYLSSMMLYIMLPFAAPEAATGLSLNSDHYTTHGTDKLFSLNLLEC</sequence>
<organism>
    <name type="scientific">Xenopus laevis</name>
    <name type="common">African clawed frog</name>
    <dbReference type="NCBI Taxonomy" id="8355"/>
    <lineage>
        <taxon>Eukaryota</taxon>
        <taxon>Metazoa</taxon>
        <taxon>Chordata</taxon>
        <taxon>Craniata</taxon>
        <taxon>Vertebrata</taxon>
        <taxon>Euteleostomi</taxon>
        <taxon>Amphibia</taxon>
        <taxon>Batrachia</taxon>
        <taxon>Anura</taxon>
        <taxon>Pipoidea</taxon>
        <taxon>Pipidae</taxon>
        <taxon>Xenopodinae</taxon>
        <taxon>Xenopus</taxon>
        <taxon>Xenopus</taxon>
    </lineage>
</organism>